<organism>
    <name type="scientific">Brucella suis biovar 1 (strain 1330)</name>
    <dbReference type="NCBI Taxonomy" id="204722"/>
    <lineage>
        <taxon>Bacteria</taxon>
        <taxon>Pseudomonadati</taxon>
        <taxon>Pseudomonadota</taxon>
        <taxon>Alphaproteobacteria</taxon>
        <taxon>Hyphomicrobiales</taxon>
        <taxon>Brucellaceae</taxon>
        <taxon>Brucella/Ochrobactrum group</taxon>
        <taxon>Brucella</taxon>
    </lineage>
</organism>
<evidence type="ECO:0000255" key="1">
    <source>
        <dbReference type="HAMAP-Rule" id="MF_00168"/>
    </source>
</evidence>
<gene>
    <name evidence="1" type="primary">tgt</name>
    <name type="ordered locus">BR1091</name>
    <name type="ordered locus">BS1330_I1087</name>
</gene>
<name>TGT_BRUSU</name>
<keyword id="KW-0328">Glycosyltransferase</keyword>
<keyword id="KW-0671">Queuosine biosynthesis</keyword>
<keyword id="KW-0808">Transferase</keyword>
<keyword id="KW-0819">tRNA processing</keyword>
<accession>Q8G0K1</accession>
<accession>G0KA13</accession>
<comment type="function">
    <text evidence="1">Catalyzes the base-exchange of a guanine (G) residue with the queuine precursor 7-aminomethyl-7-deazaguanine (PreQ1) at position 34 (anticodon wobble position) in tRNAs with GU(N) anticodons (tRNA-Asp, -Asn, -His and -Tyr). Catalysis occurs through a double-displacement mechanism. The nucleophile active site attacks the C1' of nucleotide 34 to detach the guanine base from the RNA, forming a covalent enzyme-RNA intermediate. The proton acceptor active site deprotonates the incoming PreQ1, allowing a nucleophilic attack on the C1' of the ribose to form the product. After dissociation, two additional enzymatic reactions on the tRNA convert PreQ1 to queuine (Q), resulting in the hypermodified nucleoside queuosine (7-(((4,5-cis-dihydroxy-2-cyclopenten-1-yl)amino)methyl)-7-deazaguanosine).</text>
</comment>
<comment type="catalytic activity">
    <reaction evidence="1">
        <text>7-aminomethyl-7-carbaguanine + guanosine(34) in tRNA = 7-aminomethyl-7-carbaguanosine(34) in tRNA + guanine</text>
        <dbReference type="Rhea" id="RHEA:24104"/>
        <dbReference type="Rhea" id="RHEA-COMP:10341"/>
        <dbReference type="Rhea" id="RHEA-COMP:10342"/>
        <dbReference type="ChEBI" id="CHEBI:16235"/>
        <dbReference type="ChEBI" id="CHEBI:58703"/>
        <dbReference type="ChEBI" id="CHEBI:74269"/>
        <dbReference type="ChEBI" id="CHEBI:82833"/>
        <dbReference type="EC" id="2.4.2.29"/>
    </reaction>
</comment>
<comment type="pathway">
    <text evidence="1">tRNA modification; tRNA-queuosine biosynthesis.</text>
</comment>
<comment type="subunit">
    <text evidence="1">Homodimer. Within each dimer, one monomer is responsible for RNA recognition and catalysis, while the other monomer binds to the replacement base PreQ1.</text>
</comment>
<comment type="similarity">
    <text evidence="1">Belongs to the queuine tRNA-ribosyltransferase family.</text>
</comment>
<protein>
    <recommendedName>
        <fullName evidence="1">Queuine tRNA-ribosyltransferase</fullName>
        <ecNumber evidence="1">2.4.2.29</ecNumber>
    </recommendedName>
    <alternativeName>
        <fullName evidence="1">Guanine insertion enzyme</fullName>
    </alternativeName>
    <alternativeName>
        <fullName evidence="1">tRNA-guanine transglycosylase</fullName>
    </alternativeName>
</protein>
<reference key="1">
    <citation type="journal article" date="2002" name="Proc. Natl. Acad. Sci. U.S.A.">
        <title>The Brucella suis genome reveals fundamental similarities between animal and plant pathogens and symbionts.</title>
        <authorList>
            <person name="Paulsen I.T."/>
            <person name="Seshadri R."/>
            <person name="Nelson K.E."/>
            <person name="Eisen J.A."/>
            <person name="Heidelberg J.F."/>
            <person name="Read T.D."/>
            <person name="Dodson R.J."/>
            <person name="Umayam L.A."/>
            <person name="Brinkac L.M."/>
            <person name="Beanan M.J."/>
            <person name="Daugherty S.C."/>
            <person name="DeBoy R.T."/>
            <person name="Durkin A.S."/>
            <person name="Kolonay J.F."/>
            <person name="Madupu R."/>
            <person name="Nelson W.C."/>
            <person name="Ayodeji B."/>
            <person name="Kraul M."/>
            <person name="Shetty J."/>
            <person name="Malek J.A."/>
            <person name="Van Aken S.E."/>
            <person name="Riedmuller S."/>
            <person name="Tettelin H."/>
            <person name="Gill S.R."/>
            <person name="White O."/>
            <person name="Salzberg S.L."/>
            <person name="Hoover D.L."/>
            <person name="Lindler L.E."/>
            <person name="Halling S.M."/>
            <person name="Boyle S.M."/>
            <person name="Fraser C.M."/>
        </authorList>
    </citation>
    <scope>NUCLEOTIDE SEQUENCE [LARGE SCALE GENOMIC DNA]</scope>
    <source>
        <strain>1330</strain>
    </source>
</reference>
<reference key="2">
    <citation type="journal article" date="2011" name="J. Bacteriol.">
        <title>Revised genome sequence of Brucella suis 1330.</title>
        <authorList>
            <person name="Tae H."/>
            <person name="Shallom S."/>
            <person name="Settlage R."/>
            <person name="Preston D."/>
            <person name="Adams L.G."/>
            <person name="Garner H.R."/>
        </authorList>
    </citation>
    <scope>NUCLEOTIDE SEQUENCE [LARGE SCALE GENOMIC DNA]</scope>
    <source>
        <strain>1330</strain>
    </source>
</reference>
<dbReference type="EC" id="2.4.2.29" evidence="1"/>
<dbReference type="EMBL" id="AE014291">
    <property type="protein sequence ID" value="AAN30011.1"/>
    <property type="molecule type" value="Genomic_DNA"/>
</dbReference>
<dbReference type="EMBL" id="CP002997">
    <property type="protein sequence ID" value="AEM18429.1"/>
    <property type="molecule type" value="Genomic_DNA"/>
</dbReference>
<dbReference type="RefSeq" id="WP_002970039.1">
    <property type="nucleotide sequence ID" value="NC_017251.1"/>
</dbReference>
<dbReference type="SMR" id="Q8G0K1"/>
<dbReference type="GeneID" id="93016567"/>
<dbReference type="KEGG" id="bms:BR1091"/>
<dbReference type="KEGG" id="bsi:BS1330_I1087"/>
<dbReference type="HOGENOM" id="CLU_022060_0_1_5"/>
<dbReference type="PhylomeDB" id="Q8G0K1"/>
<dbReference type="UniPathway" id="UPA00392"/>
<dbReference type="Proteomes" id="UP000007104">
    <property type="component" value="Chromosome I"/>
</dbReference>
<dbReference type="GO" id="GO:0005829">
    <property type="term" value="C:cytosol"/>
    <property type="evidence" value="ECO:0007669"/>
    <property type="project" value="TreeGrafter"/>
</dbReference>
<dbReference type="GO" id="GO:0008479">
    <property type="term" value="F:tRNA-guanosine(34) queuine transglycosylase activity"/>
    <property type="evidence" value="ECO:0007669"/>
    <property type="project" value="UniProtKB-UniRule"/>
</dbReference>
<dbReference type="GO" id="GO:0008616">
    <property type="term" value="P:queuosine biosynthetic process"/>
    <property type="evidence" value="ECO:0007669"/>
    <property type="project" value="UniProtKB-UniRule"/>
</dbReference>
<dbReference type="GO" id="GO:0002099">
    <property type="term" value="P:tRNA wobble guanine modification"/>
    <property type="evidence" value="ECO:0007669"/>
    <property type="project" value="TreeGrafter"/>
</dbReference>
<dbReference type="GO" id="GO:0101030">
    <property type="term" value="P:tRNA-guanine transglycosylation"/>
    <property type="evidence" value="ECO:0007669"/>
    <property type="project" value="InterPro"/>
</dbReference>
<dbReference type="FunFam" id="3.20.20.105:FF:000001">
    <property type="entry name" value="Queuine tRNA-ribosyltransferase"/>
    <property type="match status" value="1"/>
</dbReference>
<dbReference type="Gene3D" id="3.20.20.105">
    <property type="entry name" value="Queuine tRNA-ribosyltransferase-like"/>
    <property type="match status" value="1"/>
</dbReference>
<dbReference type="HAMAP" id="MF_00168">
    <property type="entry name" value="Q_tRNA_Tgt"/>
    <property type="match status" value="1"/>
</dbReference>
<dbReference type="InterPro" id="IPR050076">
    <property type="entry name" value="ArchSynthase1/Queuine_TRR"/>
</dbReference>
<dbReference type="InterPro" id="IPR004803">
    <property type="entry name" value="TGT"/>
</dbReference>
<dbReference type="InterPro" id="IPR036511">
    <property type="entry name" value="TGT-like_sf"/>
</dbReference>
<dbReference type="InterPro" id="IPR002616">
    <property type="entry name" value="tRNA_ribo_trans-like"/>
</dbReference>
<dbReference type="NCBIfam" id="TIGR00430">
    <property type="entry name" value="Q_tRNA_tgt"/>
    <property type="match status" value="1"/>
</dbReference>
<dbReference type="NCBIfam" id="TIGR00449">
    <property type="entry name" value="tgt_general"/>
    <property type="match status" value="1"/>
</dbReference>
<dbReference type="PANTHER" id="PTHR46499">
    <property type="entry name" value="QUEUINE TRNA-RIBOSYLTRANSFERASE"/>
    <property type="match status" value="1"/>
</dbReference>
<dbReference type="PANTHER" id="PTHR46499:SF1">
    <property type="entry name" value="QUEUINE TRNA-RIBOSYLTRANSFERASE"/>
    <property type="match status" value="1"/>
</dbReference>
<dbReference type="Pfam" id="PF01702">
    <property type="entry name" value="TGT"/>
    <property type="match status" value="1"/>
</dbReference>
<dbReference type="SUPFAM" id="SSF51713">
    <property type="entry name" value="tRNA-guanine transglycosylase"/>
    <property type="match status" value="1"/>
</dbReference>
<feature type="chain" id="PRO_0000135456" description="Queuine tRNA-ribosyltransferase">
    <location>
        <begin position="1"/>
        <end position="377"/>
    </location>
</feature>
<feature type="region of interest" description="RNA binding" evidence="1">
    <location>
        <begin position="249"/>
        <end position="255"/>
    </location>
</feature>
<feature type="region of interest" description="RNA binding; important for wobble base 34 recognition" evidence="1">
    <location>
        <begin position="273"/>
        <end position="277"/>
    </location>
</feature>
<feature type="active site" description="Proton acceptor" evidence="1">
    <location>
        <position position="94"/>
    </location>
</feature>
<feature type="active site" description="Nucleophile" evidence="1">
    <location>
        <position position="268"/>
    </location>
</feature>
<feature type="binding site" evidence="1">
    <location>
        <begin position="94"/>
        <end position="98"/>
    </location>
    <ligand>
        <name>substrate</name>
    </ligand>
</feature>
<feature type="binding site" evidence="1">
    <location>
        <position position="148"/>
    </location>
    <ligand>
        <name>substrate</name>
    </ligand>
</feature>
<feature type="binding site" evidence="1">
    <location>
        <position position="191"/>
    </location>
    <ligand>
        <name>substrate</name>
    </ligand>
</feature>
<feature type="binding site" evidence="1">
    <location>
        <position position="218"/>
    </location>
    <ligand>
        <name>substrate</name>
    </ligand>
</feature>
<proteinExistence type="inferred from homology"/>
<sequence>MTTENFGFKVLARDGAARQGEISMPRGVVRTPAFMPVGTAGTVKAMYMDQVKELGADIILGNTYHLMLRPGAERVARLGGLHEFGGWKGPILTDSGGFQVMSLAQLRKLNEHGVTFRSHIDGKAYEMTPERSIEIQGLLDSDIQMQLDECVALPSPEKNTERAMELSLRWAERCKVAFGDQPGKAMFGIVQGGDIARLRERSAEALKAMDLKGYSVGGLAVGEPQEVMLDMLEVVCPILPTEKPRYLMGVGTPDDILKSVARGIDMFDCVMPTRAGRHGLAFTRFGKVNLRNARHAEDHRPLDPQSDCPASRDYSRAYLHHLVKSGEALGAMLLTWNNLAYYQYLMKGIRAAIADGNFSDFTAETTEGWARGDMPAL</sequence>